<gene>
    <name evidence="1" type="primary">fabH</name>
    <name type="ordered locus">USA300HOU_0941</name>
</gene>
<dbReference type="EC" id="2.3.1.180" evidence="1"/>
<dbReference type="EMBL" id="CP000730">
    <property type="protein sequence ID" value="ABX28962.1"/>
    <property type="molecule type" value="Genomic_DNA"/>
</dbReference>
<dbReference type="RefSeq" id="WP_001100525.1">
    <property type="nucleotide sequence ID" value="NC_010079.1"/>
</dbReference>
<dbReference type="SMR" id="A8Z088"/>
<dbReference type="KEGG" id="sax:USA300HOU_0941"/>
<dbReference type="HOGENOM" id="CLU_039592_3_1_9"/>
<dbReference type="UniPathway" id="UPA00094"/>
<dbReference type="GO" id="GO:0005737">
    <property type="term" value="C:cytoplasm"/>
    <property type="evidence" value="ECO:0007669"/>
    <property type="project" value="UniProtKB-SubCell"/>
</dbReference>
<dbReference type="GO" id="GO:0004315">
    <property type="term" value="F:3-oxoacyl-[acyl-carrier-protein] synthase activity"/>
    <property type="evidence" value="ECO:0007669"/>
    <property type="project" value="InterPro"/>
</dbReference>
<dbReference type="GO" id="GO:0033818">
    <property type="term" value="F:beta-ketoacyl-acyl-carrier-protein synthase III activity"/>
    <property type="evidence" value="ECO:0007669"/>
    <property type="project" value="UniProtKB-UniRule"/>
</dbReference>
<dbReference type="GO" id="GO:0006633">
    <property type="term" value="P:fatty acid biosynthetic process"/>
    <property type="evidence" value="ECO:0007669"/>
    <property type="project" value="UniProtKB-UniRule"/>
</dbReference>
<dbReference type="CDD" id="cd00830">
    <property type="entry name" value="KAS_III"/>
    <property type="match status" value="1"/>
</dbReference>
<dbReference type="FunFam" id="3.40.47.10:FF:000004">
    <property type="entry name" value="3-oxoacyl-[acyl-carrier-protein] synthase 3"/>
    <property type="match status" value="1"/>
</dbReference>
<dbReference type="Gene3D" id="3.40.47.10">
    <property type="match status" value="1"/>
</dbReference>
<dbReference type="HAMAP" id="MF_01815">
    <property type="entry name" value="FabH"/>
    <property type="match status" value="1"/>
</dbReference>
<dbReference type="InterPro" id="IPR013747">
    <property type="entry name" value="ACP_syn_III_C"/>
</dbReference>
<dbReference type="InterPro" id="IPR013751">
    <property type="entry name" value="ACP_syn_III_N"/>
</dbReference>
<dbReference type="InterPro" id="IPR004655">
    <property type="entry name" value="FabH"/>
</dbReference>
<dbReference type="InterPro" id="IPR016039">
    <property type="entry name" value="Thiolase-like"/>
</dbReference>
<dbReference type="NCBIfam" id="TIGR00747">
    <property type="entry name" value="fabH"/>
    <property type="match status" value="1"/>
</dbReference>
<dbReference type="NCBIfam" id="NF006829">
    <property type="entry name" value="PRK09352.1"/>
    <property type="match status" value="1"/>
</dbReference>
<dbReference type="PANTHER" id="PTHR43091">
    <property type="entry name" value="3-OXOACYL-[ACYL-CARRIER-PROTEIN] SYNTHASE"/>
    <property type="match status" value="1"/>
</dbReference>
<dbReference type="PANTHER" id="PTHR43091:SF1">
    <property type="entry name" value="BETA-KETOACYL-[ACYL-CARRIER-PROTEIN] SYNTHASE III, CHLOROPLASTIC"/>
    <property type="match status" value="1"/>
</dbReference>
<dbReference type="Pfam" id="PF08545">
    <property type="entry name" value="ACP_syn_III"/>
    <property type="match status" value="1"/>
</dbReference>
<dbReference type="Pfam" id="PF08541">
    <property type="entry name" value="ACP_syn_III_C"/>
    <property type="match status" value="1"/>
</dbReference>
<dbReference type="SUPFAM" id="SSF53901">
    <property type="entry name" value="Thiolase-like"/>
    <property type="match status" value="1"/>
</dbReference>
<accession>A8Z088</accession>
<protein>
    <recommendedName>
        <fullName evidence="1">Beta-ketoacyl-[acyl-carrier-protein] synthase III</fullName>
        <shortName evidence="1">Beta-ketoacyl-ACP synthase III</shortName>
        <shortName evidence="1">KAS III</shortName>
        <ecNumber evidence="1">2.3.1.180</ecNumber>
    </recommendedName>
    <alternativeName>
        <fullName evidence="1">3-oxoacyl-[acyl-carrier-protein] synthase 3</fullName>
    </alternativeName>
    <alternativeName>
        <fullName evidence="1">3-oxoacyl-[acyl-carrier-protein] synthase III</fullName>
    </alternativeName>
</protein>
<organism>
    <name type="scientific">Staphylococcus aureus (strain USA300 / TCH1516)</name>
    <dbReference type="NCBI Taxonomy" id="451516"/>
    <lineage>
        <taxon>Bacteria</taxon>
        <taxon>Bacillati</taxon>
        <taxon>Bacillota</taxon>
        <taxon>Bacilli</taxon>
        <taxon>Bacillales</taxon>
        <taxon>Staphylococcaceae</taxon>
        <taxon>Staphylococcus</taxon>
    </lineage>
</organism>
<evidence type="ECO:0000255" key="1">
    <source>
        <dbReference type="HAMAP-Rule" id="MF_01815"/>
    </source>
</evidence>
<comment type="function">
    <text evidence="1">Catalyzes the condensation reaction of fatty acid synthesis by the addition to an acyl acceptor of two carbons from malonyl-ACP. Catalyzes the first condensation reaction which initiates fatty acid synthesis and may therefore play a role in governing the total rate of fatty acid production. Possesses both acetoacetyl-ACP synthase and acetyl transacylase activities. Its substrate specificity determines the biosynthesis of branched-chain and/or straight-chain of fatty acids.</text>
</comment>
<comment type="catalytic activity">
    <reaction evidence="1">
        <text>malonyl-[ACP] + acetyl-CoA + H(+) = 3-oxobutanoyl-[ACP] + CO2 + CoA</text>
        <dbReference type="Rhea" id="RHEA:12080"/>
        <dbReference type="Rhea" id="RHEA-COMP:9623"/>
        <dbReference type="Rhea" id="RHEA-COMP:9625"/>
        <dbReference type="ChEBI" id="CHEBI:15378"/>
        <dbReference type="ChEBI" id="CHEBI:16526"/>
        <dbReference type="ChEBI" id="CHEBI:57287"/>
        <dbReference type="ChEBI" id="CHEBI:57288"/>
        <dbReference type="ChEBI" id="CHEBI:78449"/>
        <dbReference type="ChEBI" id="CHEBI:78450"/>
        <dbReference type="EC" id="2.3.1.180"/>
    </reaction>
</comment>
<comment type="pathway">
    <text evidence="1">Lipid metabolism; fatty acid biosynthesis.</text>
</comment>
<comment type="subunit">
    <text evidence="1">Homodimer.</text>
</comment>
<comment type="subcellular location">
    <subcellularLocation>
        <location evidence="1">Cytoplasm</location>
    </subcellularLocation>
</comment>
<comment type="domain">
    <text evidence="1">The last Arg residue of the ACP-binding site is essential for the weak association between ACP/AcpP and FabH.</text>
</comment>
<comment type="similarity">
    <text evidence="1">Belongs to the thiolase-like superfamily. FabH family.</text>
</comment>
<feature type="chain" id="PRO_1000088326" description="Beta-ketoacyl-[acyl-carrier-protein] synthase III">
    <location>
        <begin position="1"/>
        <end position="313"/>
    </location>
</feature>
<feature type="region of interest" description="ACP-binding" evidence="1">
    <location>
        <begin position="239"/>
        <end position="243"/>
    </location>
</feature>
<feature type="active site" evidence="1">
    <location>
        <position position="112"/>
    </location>
</feature>
<feature type="active site" evidence="1">
    <location>
        <position position="238"/>
    </location>
</feature>
<feature type="active site" evidence="1">
    <location>
        <position position="268"/>
    </location>
</feature>
<sequence>MNVGIKGFGAYAPEKIIDNAYFEQFLDTSDEWISKMTGIKERHWADDDQDTSDLAYEASLKAIADAGIQPEDIDMIIVATATGDMPFPTVANMLQERLGTGKVASMDQLAACSGFMYSMITAKQYVQSGDYHNILVVGADKLSKITDLTDRSTAVLFGDGAGAVIIGEVSDGRGIISYEMGSDGTGGKHLYLDKDTGKLKMNGREVFKFAVRIMGDASTRVVEKANLTSDDIDLFIPHQANIRIMESARERLGISKDKMSVSVNKYGNTSAASIPLSIDQELKNGKIKDDDTIVLVGFGGGLTWGAMTIKWGK</sequence>
<keyword id="KW-0012">Acyltransferase</keyword>
<keyword id="KW-0963">Cytoplasm</keyword>
<keyword id="KW-0275">Fatty acid biosynthesis</keyword>
<keyword id="KW-0276">Fatty acid metabolism</keyword>
<keyword id="KW-0444">Lipid biosynthesis</keyword>
<keyword id="KW-0443">Lipid metabolism</keyword>
<keyword id="KW-0511">Multifunctional enzyme</keyword>
<keyword id="KW-0808">Transferase</keyword>
<proteinExistence type="inferred from homology"/>
<reference key="1">
    <citation type="journal article" date="2007" name="BMC Microbiol.">
        <title>Subtle genetic changes enhance virulence of methicillin resistant and sensitive Staphylococcus aureus.</title>
        <authorList>
            <person name="Highlander S.K."/>
            <person name="Hulten K.G."/>
            <person name="Qin X."/>
            <person name="Jiang H."/>
            <person name="Yerrapragada S."/>
            <person name="Mason E.O. Jr."/>
            <person name="Shang Y."/>
            <person name="Williams T.M."/>
            <person name="Fortunov R.M."/>
            <person name="Liu Y."/>
            <person name="Igboeli O."/>
            <person name="Petrosino J."/>
            <person name="Tirumalai M."/>
            <person name="Uzman A."/>
            <person name="Fox G.E."/>
            <person name="Cardenas A.M."/>
            <person name="Muzny D.M."/>
            <person name="Hemphill L."/>
            <person name="Ding Y."/>
            <person name="Dugan S."/>
            <person name="Blyth P.R."/>
            <person name="Buhay C.J."/>
            <person name="Dinh H.H."/>
            <person name="Hawes A.C."/>
            <person name="Holder M."/>
            <person name="Kovar C.L."/>
            <person name="Lee S.L."/>
            <person name="Liu W."/>
            <person name="Nazareth L.V."/>
            <person name="Wang Q."/>
            <person name="Zhou J."/>
            <person name="Kaplan S.L."/>
            <person name="Weinstock G.M."/>
        </authorList>
    </citation>
    <scope>NUCLEOTIDE SEQUENCE [LARGE SCALE GENOMIC DNA]</scope>
    <source>
        <strain>USA300 / TCH1516</strain>
    </source>
</reference>
<name>FABH_STAAT</name>